<dbReference type="EMBL" id="BX897700">
    <property type="protein sequence ID" value="CAF25807.1"/>
    <property type="molecule type" value="Genomic_DNA"/>
</dbReference>
<dbReference type="RefSeq" id="WP_011179104.1">
    <property type="nucleotide sequence ID" value="NC_005955.1"/>
</dbReference>
<dbReference type="SMR" id="Q6G0H9"/>
<dbReference type="KEGG" id="bqu:BQ03070"/>
<dbReference type="eggNOG" id="COG3004">
    <property type="taxonomic scope" value="Bacteria"/>
</dbReference>
<dbReference type="HOGENOM" id="CLU_015803_1_2_5"/>
<dbReference type="OrthoDB" id="9808135at2"/>
<dbReference type="Proteomes" id="UP000000597">
    <property type="component" value="Chromosome"/>
</dbReference>
<dbReference type="GO" id="GO:0005886">
    <property type="term" value="C:plasma membrane"/>
    <property type="evidence" value="ECO:0007669"/>
    <property type="project" value="UniProtKB-SubCell"/>
</dbReference>
<dbReference type="GO" id="GO:0015385">
    <property type="term" value="F:sodium:proton antiporter activity"/>
    <property type="evidence" value="ECO:0007669"/>
    <property type="project" value="TreeGrafter"/>
</dbReference>
<dbReference type="GO" id="GO:0006885">
    <property type="term" value="P:regulation of pH"/>
    <property type="evidence" value="ECO:0007669"/>
    <property type="project" value="InterPro"/>
</dbReference>
<dbReference type="Gene3D" id="1.20.1530.10">
    <property type="entry name" value="Na+/H+ antiporter like domain"/>
    <property type="match status" value="1"/>
</dbReference>
<dbReference type="HAMAP" id="MF_01844">
    <property type="entry name" value="NhaA"/>
    <property type="match status" value="1"/>
</dbReference>
<dbReference type="InterPro" id="IPR023171">
    <property type="entry name" value="Na/H_antiporter_dom_sf"/>
</dbReference>
<dbReference type="InterPro" id="IPR004670">
    <property type="entry name" value="NhaA"/>
</dbReference>
<dbReference type="NCBIfam" id="TIGR00773">
    <property type="entry name" value="NhaA"/>
    <property type="match status" value="1"/>
</dbReference>
<dbReference type="PANTHER" id="PTHR30341:SF0">
    <property type="entry name" value="NA(+)_H(+) ANTIPORTER NHAA"/>
    <property type="match status" value="1"/>
</dbReference>
<dbReference type="PANTHER" id="PTHR30341">
    <property type="entry name" value="SODIUM ION/PROTON ANTIPORTER NHAA-RELATED"/>
    <property type="match status" value="1"/>
</dbReference>
<dbReference type="Pfam" id="PF06965">
    <property type="entry name" value="Na_H_antiport_1"/>
    <property type="match status" value="1"/>
</dbReference>
<sequence length="458" mass="49609">MSALSSNRLPNRASLVTNRAFSALEGFLHVEAFSGIVLLLAAAAALIFANSQYASVYESLWHTPLGFNFGHFTLSWDLHFWVNDALMTVFFLVAGMEIRREIHEGALADFKQAILPIVSAIGGVCFPALIYLSFNFNSEHTHGWAVPTATDIAFALGILALLGKKIPANLHVILLSLAIIDDIIAVLIIAFFYSTNIDPSGLAIAIAGIALVLFFQWIGLASAWLYILPGAIIWWGLMITGVHPSLTGVILGMMTPVFPTRTLVAPLTILSNAMQILQEKNIKTDLHHISTALKKMRKGQRDMIAPVIRVQKTLHPWVAYGVMPIFAFANAGVSFANFDLSSHESFLVVLSVVIGLFIGKPLGIITASYLAVKSGLCRLPPHMTWTGILLIGFLAGIGFTMSIFVSMLAFKDIVLLDSAKIGVLCGSGLSALAGLGYGLIYIKRNKNKKVLHNLNGIK</sequence>
<name>NHAA_BARQU</name>
<feature type="chain" id="PRO_0000334237" description="Na(+)/H(+) antiporter NhaA">
    <location>
        <begin position="1"/>
        <end position="458"/>
    </location>
</feature>
<feature type="transmembrane region" description="Helical" evidence="1">
    <location>
        <begin position="27"/>
        <end position="47"/>
    </location>
</feature>
<feature type="transmembrane region" description="Helical" evidence="1">
    <location>
        <begin position="78"/>
        <end position="98"/>
    </location>
</feature>
<feature type="transmembrane region" description="Helical" evidence="1">
    <location>
        <begin position="114"/>
        <end position="134"/>
    </location>
</feature>
<feature type="transmembrane region" description="Helical" evidence="1">
    <location>
        <begin position="143"/>
        <end position="163"/>
    </location>
</feature>
<feature type="transmembrane region" description="Helical" evidence="1">
    <location>
        <begin position="172"/>
        <end position="192"/>
    </location>
</feature>
<feature type="transmembrane region" description="Helical" evidence="1">
    <location>
        <begin position="201"/>
        <end position="221"/>
    </location>
</feature>
<feature type="transmembrane region" description="Helical" evidence="1">
    <location>
        <begin position="222"/>
        <end position="242"/>
    </location>
</feature>
<feature type="transmembrane region" description="Helical" evidence="1">
    <location>
        <begin position="249"/>
        <end position="269"/>
    </location>
</feature>
<feature type="transmembrane region" description="Helical" evidence="1">
    <location>
        <begin position="316"/>
        <end position="336"/>
    </location>
</feature>
<feature type="transmembrane region" description="Helical" evidence="1">
    <location>
        <begin position="346"/>
        <end position="366"/>
    </location>
</feature>
<feature type="transmembrane region" description="Helical" evidence="1">
    <location>
        <begin position="388"/>
        <end position="408"/>
    </location>
</feature>
<feature type="transmembrane region" description="Helical" evidence="1">
    <location>
        <begin position="421"/>
        <end position="441"/>
    </location>
</feature>
<keyword id="KW-0050">Antiport</keyword>
<keyword id="KW-0997">Cell inner membrane</keyword>
<keyword id="KW-1003">Cell membrane</keyword>
<keyword id="KW-0406">Ion transport</keyword>
<keyword id="KW-0472">Membrane</keyword>
<keyword id="KW-0915">Sodium</keyword>
<keyword id="KW-0739">Sodium transport</keyword>
<keyword id="KW-0812">Transmembrane</keyword>
<keyword id="KW-1133">Transmembrane helix</keyword>
<keyword id="KW-0813">Transport</keyword>
<comment type="function">
    <text evidence="1">Na(+)/H(+) antiporter that extrudes sodium in exchange for external protons.</text>
</comment>
<comment type="catalytic activity">
    <reaction evidence="1">
        <text>Na(+)(in) + 2 H(+)(out) = Na(+)(out) + 2 H(+)(in)</text>
        <dbReference type="Rhea" id="RHEA:29251"/>
        <dbReference type="ChEBI" id="CHEBI:15378"/>
        <dbReference type="ChEBI" id="CHEBI:29101"/>
    </reaction>
    <physiologicalReaction direction="left-to-right" evidence="1">
        <dbReference type="Rhea" id="RHEA:29252"/>
    </physiologicalReaction>
</comment>
<comment type="subcellular location">
    <subcellularLocation>
        <location evidence="1">Cell inner membrane</location>
        <topology evidence="1">Multi-pass membrane protein</topology>
    </subcellularLocation>
</comment>
<comment type="similarity">
    <text evidence="1">Belongs to the NhaA Na(+)/H(+) (TC 2.A.33) antiporter family.</text>
</comment>
<reference key="1">
    <citation type="journal article" date="2004" name="Proc. Natl. Acad. Sci. U.S.A.">
        <title>The louse-borne human pathogen Bartonella quintana is a genomic derivative of the zoonotic agent Bartonella henselae.</title>
        <authorList>
            <person name="Alsmark U.C.M."/>
            <person name="Frank A.C."/>
            <person name="Karlberg E.O."/>
            <person name="Legault B.-A."/>
            <person name="Ardell D.H."/>
            <person name="Canbaeck B."/>
            <person name="Eriksson A.-S."/>
            <person name="Naeslund A.K."/>
            <person name="Handley S.A."/>
            <person name="Huvet M."/>
            <person name="La Scola B."/>
            <person name="Holmberg M."/>
            <person name="Andersson S.G.E."/>
        </authorList>
    </citation>
    <scope>NUCLEOTIDE SEQUENCE [LARGE SCALE GENOMIC DNA]</scope>
    <source>
        <strain>Toulouse</strain>
    </source>
</reference>
<protein>
    <recommendedName>
        <fullName evidence="1">Na(+)/H(+) antiporter NhaA</fullName>
    </recommendedName>
    <alternativeName>
        <fullName evidence="1">Sodium/proton antiporter NhaA</fullName>
    </alternativeName>
</protein>
<organism>
    <name type="scientific">Bartonella quintana (strain Toulouse)</name>
    <name type="common">Rochalimaea quintana</name>
    <dbReference type="NCBI Taxonomy" id="283165"/>
    <lineage>
        <taxon>Bacteria</taxon>
        <taxon>Pseudomonadati</taxon>
        <taxon>Pseudomonadota</taxon>
        <taxon>Alphaproteobacteria</taxon>
        <taxon>Hyphomicrobiales</taxon>
        <taxon>Bartonellaceae</taxon>
        <taxon>Bartonella</taxon>
    </lineage>
</organism>
<proteinExistence type="inferred from homology"/>
<gene>
    <name evidence="1" type="primary">nhaA</name>
    <name type="ordered locus">BQ03070</name>
</gene>
<evidence type="ECO:0000255" key="1">
    <source>
        <dbReference type="HAMAP-Rule" id="MF_01844"/>
    </source>
</evidence>
<accession>Q6G0H9</accession>